<accession>Q2RWI9</accession>
<organism>
    <name type="scientific">Rhodospirillum rubrum (strain ATCC 11170 / ATH 1.1.1 / DSM 467 / LMG 4362 / NCIMB 8255 / S1)</name>
    <dbReference type="NCBI Taxonomy" id="269796"/>
    <lineage>
        <taxon>Bacteria</taxon>
        <taxon>Pseudomonadati</taxon>
        <taxon>Pseudomonadota</taxon>
        <taxon>Alphaproteobacteria</taxon>
        <taxon>Rhodospirillales</taxon>
        <taxon>Rhodospirillaceae</taxon>
        <taxon>Rhodospirillum</taxon>
    </lineage>
</organism>
<name>MODC_RHORT</name>
<evidence type="ECO:0000255" key="1">
    <source>
        <dbReference type="HAMAP-Rule" id="MF_01705"/>
    </source>
</evidence>
<evidence type="ECO:0000255" key="2">
    <source>
        <dbReference type="PROSITE-ProRule" id="PRU01213"/>
    </source>
</evidence>
<keyword id="KW-0067">ATP-binding</keyword>
<keyword id="KW-0997">Cell inner membrane</keyword>
<keyword id="KW-1003">Cell membrane</keyword>
<keyword id="KW-0472">Membrane</keyword>
<keyword id="KW-0500">Molybdenum</keyword>
<keyword id="KW-0547">Nucleotide-binding</keyword>
<keyword id="KW-1185">Reference proteome</keyword>
<keyword id="KW-1278">Translocase</keyword>
<keyword id="KW-0813">Transport</keyword>
<sequence length="370" mass="39673">MLDIDVLRQQGALRLSIAFRAGKGVTALFGRSGAGKTSVISMVAGLSRPDGGRIVVDDRVLFDGAKGIDLAPEKRRVGYVFQEGRLFPHLTVRQNLAFGMNRVPAAERYVGEDDVVDLLGISALLDRRPAKLSGGEKQRVAIGRALLASPRILLMDEPLASLDAQRKDEVLPFIARLPRRFSIPILYVSHAMDEVLRLADTLVLIAEGQVAASGPLEEVLARPDIPDFAAQRDAGAVVAAKVAGRDIPFGATLLDTPAGLLRTRPIDLPLGTKVRVRIAAADISLALERPRMVSVQNILAATILAIGEPEDGRLSVDLDAGPPGGPPCRLWASITARARHDLGLVPGLRVHALIKAMSLLRDELVEHSPH</sequence>
<reference key="1">
    <citation type="journal article" date="2011" name="Stand. Genomic Sci.">
        <title>Complete genome sequence of Rhodospirillum rubrum type strain (S1).</title>
        <authorList>
            <person name="Munk A.C."/>
            <person name="Copeland A."/>
            <person name="Lucas S."/>
            <person name="Lapidus A."/>
            <person name="Del Rio T.G."/>
            <person name="Barry K."/>
            <person name="Detter J.C."/>
            <person name="Hammon N."/>
            <person name="Israni S."/>
            <person name="Pitluck S."/>
            <person name="Brettin T."/>
            <person name="Bruce D."/>
            <person name="Han C."/>
            <person name="Tapia R."/>
            <person name="Gilna P."/>
            <person name="Schmutz J."/>
            <person name="Larimer F."/>
            <person name="Land M."/>
            <person name="Kyrpides N.C."/>
            <person name="Mavromatis K."/>
            <person name="Richardson P."/>
            <person name="Rohde M."/>
            <person name="Goeker M."/>
            <person name="Klenk H.P."/>
            <person name="Zhang Y."/>
            <person name="Roberts G.P."/>
            <person name="Reslewic S."/>
            <person name="Schwartz D.C."/>
        </authorList>
    </citation>
    <scope>NUCLEOTIDE SEQUENCE [LARGE SCALE GENOMIC DNA]</scope>
    <source>
        <strain>ATCC 11170 / ATH 1.1.1 / DSM 467 / LMG 4362 / NCIMB 8255 / S1</strain>
    </source>
</reference>
<comment type="function">
    <text evidence="1">Part of the ABC transporter complex ModABC involved in molybdenum import. Responsible for energy coupling to the transport system.</text>
</comment>
<comment type="catalytic activity">
    <reaction evidence="1">
        <text>molybdate(out) + ATP + H2O = molybdate(in) + ADP + phosphate + H(+)</text>
        <dbReference type="Rhea" id="RHEA:22020"/>
        <dbReference type="ChEBI" id="CHEBI:15377"/>
        <dbReference type="ChEBI" id="CHEBI:15378"/>
        <dbReference type="ChEBI" id="CHEBI:30616"/>
        <dbReference type="ChEBI" id="CHEBI:36264"/>
        <dbReference type="ChEBI" id="CHEBI:43474"/>
        <dbReference type="ChEBI" id="CHEBI:456216"/>
        <dbReference type="EC" id="7.3.2.5"/>
    </reaction>
</comment>
<comment type="subunit">
    <text evidence="1">The complex is composed of two ATP-binding proteins (ModC), two transmembrane proteins (ModB) and a solute-binding protein (ModA).</text>
</comment>
<comment type="subcellular location">
    <subcellularLocation>
        <location evidence="1">Cell inner membrane</location>
        <topology evidence="1">Peripheral membrane protein</topology>
    </subcellularLocation>
</comment>
<comment type="similarity">
    <text evidence="1">Belongs to the ABC transporter superfamily. Molybdate importer (TC 3.A.1.8) family.</text>
</comment>
<protein>
    <recommendedName>
        <fullName evidence="1">Molybdenum import ATP-binding protein ModC</fullName>
        <ecNumber evidence="1">7.3.2.5</ecNumber>
    </recommendedName>
</protein>
<feature type="chain" id="PRO_0000271687" description="Molybdenum import ATP-binding protein ModC">
    <location>
        <begin position="1"/>
        <end position="370"/>
    </location>
</feature>
<feature type="domain" description="ABC transporter" evidence="1">
    <location>
        <begin position="1"/>
        <end position="232"/>
    </location>
</feature>
<feature type="domain" description="Mop" evidence="2">
    <location>
        <begin position="292"/>
        <end position="363"/>
    </location>
</feature>
<feature type="binding site" evidence="1">
    <location>
        <begin position="30"/>
        <end position="37"/>
    </location>
    <ligand>
        <name>ATP</name>
        <dbReference type="ChEBI" id="CHEBI:30616"/>
    </ligand>
</feature>
<dbReference type="EC" id="7.3.2.5" evidence="1"/>
<dbReference type="EMBL" id="CP000230">
    <property type="protein sequence ID" value="ABC21506.1"/>
    <property type="molecule type" value="Genomic_DNA"/>
</dbReference>
<dbReference type="RefSeq" id="WP_011388460.1">
    <property type="nucleotide sequence ID" value="NC_007643.1"/>
</dbReference>
<dbReference type="RefSeq" id="YP_425793.1">
    <property type="nucleotide sequence ID" value="NC_007643.1"/>
</dbReference>
<dbReference type="SMR" id="Q2RWI9"/>
<dbReference type="STRING" id="269796.Rru_A0702"/>
<dbReference type="EnsemblBacteria" id="ABC21506">
    <property type="protein sequence ID" value="ABC21506"/>
    <property type="gene ID" value="Rru_A0702"/>
</dbReference>
<dbReference type="KEGG" id="rru:Rru_A0702"/>
<dbReference type="PATRIC" id="fig|269796.9.peg.754"/>
<dbReference type="eggNOG" id="COG4148">
    <property type="taxonomic scope" value="Bacteria"/>
</dbReference>
<dbReference type="HOGENOM" id="CLU_000604_1_1_5"/>
<dbReference type="PhylomeDB" id="Q2RWI9"/>
<dbReference type="Proteomes" id="UP000001929">
    <property type="component" value="Chromosome"/>
</dbReference>
<dbReference type="GO" id="GO:0005886">
    <property type="term" value="C:plasma membrane"/>
    <property type="evidence" value="ECO:0007669"/>
    <property type="project" value="UniProtKB-SubCell"/>
</dbReference>
<dbReference type="GO" id="GO:0015412">
    <property type="term" value="F:ABC-type molybdate transporter activity"/>
    <property type="evidence" value="ECO:0007669"/>
    <property type="project" value="UniProtKB-EC"/>
</dbReference>
<dbReference type="GO" id="GO:0005524">
    <property type="term" value="F:ATP binding"/>
    <property type="evidence" value="ECO:0007669"/>
    <property type="project" value="UniProtKB-KW"/>
</dbReference>
<dbReference type="GO" id="GO:0016887">
    <property type="term" value="F:ATP hydrolysis activity"/>
    <property type="evidence" value="ECO:0007669"/>
    <property type="project" value="InterPro"/>
</dbReference>
<dbReference type="Gene3D" id="2.40.50.100">
    <property type="match status" value="1"/>
</dbReference>
<dbReference type="Gene3D" id="3.40.50.300">
    <property type="entry name" value="P-loop containing nucleotide triphosphate hydrolases"/>
    <property type="match status" value="1"/>
</dbReference>
<dbReference type="InterPro" id="IPR003593">
    <property type="entry name" value="AAA+_ATPase"/>
</dbReference>
<dbReference type="InterPro" id="IPR003439">
    <property type="entry name" value="ABC_transporter-like_ATP-bd"/>
</dbReference>
<dbReference type="InterPro" id="IPR017871">
    <property type="entry name" value="ABC_transporter-like_CS"/>
</dbReference>
<dbReference type="InterPro" id="IPR008995">
    <property type="entry name" value="Mo/tungstate-bd_C_term_dom"/>
</dbReference>
<dbReference type="InterPro" id="IPR011868">
    <property type="entry name" value="ModC_ABC_ATP-bd"/>
</dbReference>
<dbReference type="InterPro" id="IPR050334">
    <property type="entry name" value="Molybdenum_import_ModC"/>
</dbReference>
<dbReference type="InterPro" id="IPR004606">
    <property type="entry name" value="Mop_domain"/>
</dbReference>
<dbReference type="InterPro" id="IPR027417">
    <property type="entry name" value="P-loop_NTPase"/>
</dbReference>
<dbReference type="InterPro" id="IPR005116">
    <property type="entry name" value="Transp-assoc_OB_typ1"/>
</dbReference>
<dbReference type="NCBIfam" id="TIGR02142">
    <property type="entry name" value="modC_ABC"/>
    <property type="match status" value="1"/>
</dbReference>
<dbReference type="PANTHER" id="PTHR43514">
    <property type="entry name" value="ABC TRANSPORTER I FAMILY MEMBER 10"/>
    <property type="match status" value="1"/>
</dbReference>
<dbReference type="PANTHER" id="PTHR43514:SF4">
    <property type="entry name" value="ABC TRANSPORTER I FAMILY MEMBER 10"/>
    <property type="match status" value="1"/>
</dbReference>
<dbReference type="Pfam" id="PF00005">
    <property type="entry name" value="ABC_tran"/>
    <property type="match status" value="1"/>
</dbReference>
<dbReference type="Pfam" id="PF03459">
    <property type="entry name" value="TOBE"/>
    <property type="match status" value="1"/>
</dbReference>
<dbReference type="SMART" id="SM00382">
    <property type="entry name" value="AAA"/>
    <property type="match status" value="1"/>
</dbReference>
<dbReference type="SUPFAM" id="SSF50331">
    <property type="entry name" value="MOP-like"/>
    <property type="match status" value="1"/>
</dbReference>
<dbReference type="SUPFAM" id="SSF52540">
    <property type="entry name" value="P-loop containing nucleoside triphosphate hydrolases"/>
    <property type="match status" value="1"/>
</dbReference>
<dbReference type="PROSITE" id="PS00211">
    <property type="entry name" value="ABC_TRANSPORTER_1"/>
    <property type="match status" value="1"/>
</dbReference>
<dbReference type="PROSITE" id="PS50893">
    <property type="entry name" value="ABC_TRANSPORTER_2"/>
    <property type="match status" value="1"/>
</dbReference>
<dbReference type="PROSITE" id="PS51241">
    <property type="entry name" value="MODC"/>
    <property type="match status" value="1"/>
</dbReference>
<dbReference type="PROSITE" id="PS51866">
    <property type="entry name" value="MOP"/>
    <property type="match status" value="1"/>
</dbReference>
<gene>
    <name evidence="1" type="primary">modC</name>
    <name type="ordered locus">Rru_A0702</name>
</gene>
<proteinExistence type="inferred from homology"/>